<feature type="chain" id="PRO_0000229271" description="Ribosome maturation factor RimP">
    <location>
        <begin position="1"/>
        <end position="225"/>
    </location>
</feature>
<name>RIMP_RHORT</name>
<dbReference type="EMBL" id="CP000230">
    <property type="protein sequence ID" value="ABC24572.1"/>
    <property type="molecule type" value="Genomic_DNA"/>
</dbReference>
<dbReference type="RefSeq" id="WP_011391525.1">
    <property type="nucleotide sequence ID" value="NC_007643.1"/>
</dbReference>
<dbReference type="RefSeq" id="YP_428859.1">
    <property type="nucleotide sequence ID" value="NC_007643.1"/>
</dbReference>
<dbReference type="SMR" id="Q2RMS3"/>
<dbReference type="STRING" id="269796.Rru_A3778"/>
<dbReference type="EnsemblBacteria" id="ABC24572">
    <property type="protein sequence ID" value="ABC24572"/>
    <property type="gene ID" value="Rru_A3778"/>
</dbReference>
<dbReference type="KEGG" id="rru:Rru_A3778"/>
<dbReference type="PATRIC" id="fig|269796.9.peg.3900"/>
<dbReference type="eggNOG" id="COG0779">
    <property type="taxonomic scope" value="Bacteria"/>
</dbReference>
<dbReference type="HOGENOM" id="CLU_070525_0_1_5"/>
<dbReference type="PhylomeDB" id="Q2RMS3"/>
<dbReference type="Proteomes" id="UP000001929">
    <property type="component" value="Chromosome"/>
</dbReference>
<dbReference type="GO" id="GO:0005829">
    <property type="term" value="C:cytosol"/>
    <property type="evidence" value="ECO:0007669"/>
    <property type="project" value="TreeGrafter"/>
</dbReference>
<dbReference type="GO" id="GO:0000028">
    <property type="term" value="P:ribosomal small subunit assembly"/>
    <property type="evidence" value="ECO:0007669"/>
    <property type="project" value="TreeGrafter"/>
</dbReference>
<dbReference type="GO" id="GO:0006412">
    <property type="term" value="P:translation"/>
    <property type="evidence" value="ECO:0007669"/>
    <property type="project" value="TreeGrafter"/>
</dbReference>
<dbReference type="CDD" id="cd01734">
    <property type="entry name" value="YlxS_C"/>
    <property type="match status" value="1"/>
</dbReference>
<dbReference type="Gene3D" id="3.30.300.70">
    <property type="entry name" value="RimP-like superfamily, N-terminal"/>
    <property type="match status" value="1"/>
</dbReference>
<dbReference type="HAMAP" id="MF_01077">
    <property type="entry name" value="RimP"/>
    <property type="match status" value="1"/>
</dbReference>
<dbReference type="InterPro" id="IPR003728">
    <property type="entry name" value="Ribosome_maturation_RimP"/>
</dbReference>
<dbReference type="InterPro" id="IPR028998">
    <property type="entry name" value="RimP_C"/>
</dbReference>
<dbReference type="InterPro" id="IPR036847">
    <property type="entry name" value="RimP_C_sf"/>
</dbReference>
<dbReference type="InterPro" id="IPR028989">
    <property type="entry name" value="RimP_N"/>
</dbReference>
<dbReference type="InterPro" id="IPR035956">
    <property type="entry name" value="RimP_N_sf"/>
</dbReference>
<dbReference type="NCBIfam" id="NF000932">
    <property type="entry name" value="PRK00092.2-5"/>
    <property type="match status" value="1"/>
</dbReference>
<dbReference type="PANTHER" id="PTHR33867">
    <property type="entry name" value="RIBOSOME MATURATION FACTOR RIMP"/>
    <property type="match status" value="1"/>
</dbReference>
<dbReference type="PANTHER" id="PTHR33867:SF1">
    <property type="entry name" value="RIBOSOME MATURATION FACTOR RIMP"/>
    <property type="match status" value="1"/>
</dbReference>
<dbReference type="Pfam" id="PF17384">
    <property type="entry name" value="DUF150_C"/>
    <property type="match status" value="1"/>
</dbReference>
<dbReference type="Pfam" id="PF02576">
    <property type="entry name" value="RimP_N"/>
    <property type="match status" value="1"/>
</dbReference>
<dbReference type="SUPFAM" id="SSF74942">
    <property type="entry name" value="YhbC-like, C-terminal domain"/>
    <property type="match status" value="1"/>
</dbReference>
<dbReference type="SUPFAM" id="SSF75420">
    <property type="entry name" value="YhbC-like, N-terminal domain"/>
    <property type="match status" value="1"/>
</dbReference>
<sequence length="225" mass="24346">MALWGWRGVGRRPTFFVFASLAPIGRDFLRRNGDDARMMGHLEKLLAPTLDAMGYEVVRVTLLGSQNPTLQVMAERLDGVAMTVSDCETISRALGALLDVEDPIAGRYSLEISSPGIDRPLTRPKDYARFAGHEARIETDRLIEGHRRMKGLLLGIDEDRTVRLRLIEGKAAEDGTLPEVEIPFGAIVKAKLLLTDALIAKALKDAEALADEGEAAGGAVEGGVA</sequence>
<comment type="function">
    <text evidence="1">Required for maturation of 30S ribosomal subunits.</text>
</comment>
<comment type="subcellular location">
    <subcellularLocation>
        <location evidence="1">Cytoplasm</location>
    </subcellularLocation>
</comment>
<comment type="similarity">
    <text evidence="1">Belongs to the RimP family.</text>
</comment>
<keyword id="KW-0963">Cytoplasm</keyword>
<keyword id="KW-1185">Reference proteome</keyword>
<keyword id="KW-0690">Ribosome biogenesis</keyword>
<evidence type="ECO:0000255" key="1">
    <source>
        <dbReference type="HAMAP-Rule" id="MF_01077"/>
    </source>
</evidence>
<proteinExistence type="inferred from homology"/>
<organism>
    <name type="scientific">Rhodospirillum rubrum (strain ATCC 11170 / ATH 1.1.1 / DSM 467 / LMG 4362 / NCIMB 8255 / S1)</name>
    <dbReference type="NCBI Taxonomy" id="269796"/>
    <lineage>
        <taxon>Bacteria</taxon>
        <taxon>Pseudomonadati</taxon>
        <taxon>Pseudomonadota</taxon>
        <taxon>Alphaproteobacteria</taxon>
        <taxon>Rhodospirillales</taxon>
        <taxon>Rhodospirillaceae</taxon>
        <taxon>Rhodospirillum</taxon>
    </lineage>
</organism>
<accession>Q2RMS3</accession>
<protein>
    <recommendedName>
        <fullName evidence="1">Ribosome maturation factor RimP</fullName>
    </recommendedName>
</protein>
<gene>
    <name evidence="1" type="primary">rimP</name>
    <name type="ordered locus">Rru_A3778</name>
</gene>
<reference key="1">
    <citation type="journal article" date="2011" name="Stand. Genomic Sci.">
        <title>Complete genome sequence of Rhodospirillum rubrum type strain (S1).</title>
        <authorList>
            <person name="Munk A.C."/>
            <person name="Copeland A."/>
            <person name="Lucas S."/>
            <person name="Lapidus A."/>
            <person name="Del Rio T.G."/>
            <person name="Barry K."/>
            <person name="Detter J.C."/>
            <person name="Hammon N."/>
            <person name="Israni S."/>
            <person name="Pitluck S."/>
            <person name="Brettin T."/>
            <person name="Bruce D."/>
            <person name="Han C."/>
            <person name="Tapia R."/>
            <person name="Gilna P."/>
            <person name="Schmutz J."/>
            <person name="Larimer F."/>
            <person name="Land M."/>
            <person name="Kyrpides N.C."/>
            <person name="Mavromatis K."/>
            <person name="Richardson P."/>
            <person name="Rohde M."/>
            <person name="Goeker M."/>
            <person name="Klenk H.P."/>
            <person name="Zhang Y."/>
            <person name="Roberts G.P."/>
            <person name="Reslewic S."/>
            <person name="Schwartz D.C."/>
        </authorList>
    </citation>
    <scope>NUCLEOTIDE SEQUENCE [LARGE SCALE GENOMIC DNA]</scope>
    <source>
        <strain>ATCC 11170 / ATH 1.1.1 / DSM 467 / LMG 4362 / NCIMB 8255 / S1</strain>
    </source>
</reference>